<gene>
    <name type="primary">MT-CO1</name>
    <name type="synonym">COI</name>
    <name type="synonym">COXI</name>
    <name type="synonym">MTCO1</name>
</gene>
<sequence length="516" mass="57282">MFMNRWLFSTNHKDIGTLYLLFGAWAGMVGTGLSLLIRAELGQPGTLIGDDQVYNVLVTAHAFVMIFFMVMPIMIGGFGNWLVPLMIGAPDMAFPRMNNMSFWLLPPSFLLLMASSMIEAGAGTGWTVYPPLAGNLAHAGASVDLTIFSLHLAGVSSILGAINFITTIINMKPPAMTQYQTPLFVWSVLVTAVLLLLSLPVLAAGITMLLTDRNLNTTFFDPAGGGDPILYQHLFWFFGHPEVYILILPGFGMISHIVTYYSGKKEPFGYMGMIWAMVSIGFLGFIVWAHHMFTVGMDVDTRAYFTSATMIIAIPTGVKVFSWLATLHGGNIKWSPALMWALGFIFLFTVGGLTGIVLANSSLDIVLHDTYYVVAHFHYVLSMGAVFAIMGGFVHWFPLFSGYTLNTTWAKIHFLIMFVGVNLTFFPQHFLGLSGMPRRYSDYPDAYTTWNTISSMGSFISLTAVMLMIFIIWEAFTSKREVLAVDLTYTNLEWLNGCPPPYHTFEEPAFVNPKWS</sequence>
<feature type="chain" id="PRO_0000183291" description="Cytochrome c oxidase subunit 1">
    <location>
        <begin position="1"/>
        <end position="516"/>
    </location>
</feature>
<feature type="topological domain" description="Mitochondrial matrix" evidence="2">
    <location>
        <begin position="1"/>
        <end position="11"/>
    </location>
</feature>
<feature type="transmembrane region" description="Helical; Name=I" evidence="2">
    <location>
        <begin position="12"/>
        <end position="40"/>
    </location>
</feature>
<feature type="topological domain" description="Mitochondrial intermembrane" evidence="2">
    <location>
        <begin position="41"/>
        <end position="50"/>
    </location>
</feature>
<feature type="transmembrane region" description="Helical; Name=II" evidence="2">
    <location>
        <begin position="51"/>
        <end position="86"/>
    </location>
</feature>
<feature type="topological domain" description="Mitochondrial matrix" evidence="2">
    <location>
        <begin position="87"/>
        <end position="94"/>
    </location>
</feature>
<feature type="transmembrane region" description="Helical; Name=III" evidence="2">
    <location>
        <begin position="95"/>
        <end position="117"/>
    </location>
</feature>
<feature type="topological domain" description="Mitochondrial intermembrane" evidence="2">
    <location>
        <begin position="118"/>
        <end position="140"/>
    </location>
</feature>
<feature type="transmembrane region" description="Helical; Name=IV" evidence="2">
    <location>
        <begin position="141"/>
        <end position="170"/>
    </location>
</feature>
<feature type="topological domain" description="Mitochondrial matrix" evidence="2">
    <location>
        <begin position="171"/>
        <end position="182"/>
    </location>
</feature>
<feature type="transmembrane region" description="Helical; Name=V" evidence="2">
    <location>
        <begin position="183"/>
        <end position="212"/>
    </location>
</feature>
<feature type="topological domain" description="Mitochondrial intermembrane" evidence="2">
    <location>
        <begin position="213"/>
        <end position="227"/>
    </location>
</feature>
<feature type="transmembrane region" description="Helical; Name=VI" evidence="2">
    <location>
        <begin position="228"/>
        <end position="261"/>
    </location>
</feature>
<feature type="topological domain" description="Mitochondrial matrix" evidence="2">
    <location>
        <begin position="262"/>
        <end position="269"/>
    </location>
</feature>
<feature type="transmembrane region" description="Helical; Name=VII" evidence="2">
    <location>
        <begin position="270"/>
        <end position="286"/>
    </location>
</feature>
<feature type="topological domain" description="Mitochondrial intermembrane" evidence="2">
    <location>
        <begin position="287"/>
        <end position="298"/>
    </location>
</feature>
<feature type="transmembrane region" description="Helical; Name=VIII" evidence="2">
    <location>
        <begin position="299"/>
        <end position="327"/>
    </location>
</feature>
<feature type="topological domain" description="Mitochondrial matrix" evidence="2">
    <location>
        <begin position="328"/>
        <end position="335"/>
    </location>
</feature>
<feature type="transmembrane region" description="Helical; Name=IX" evidence="2">
    <location>
        <begin position="336"/>
        <end position="357"/>
    </location>
</feature>
<feature type="topological domain" description="Mitochondrial intermembrane" evidence="2">
    <location>
        <begin position="358"/>
        <end position="370"/>
    </location>
</feature>
<feature type="transmembrane region" description="Helical; Name=X" evidence="2">
    <location>
        <begin position="371"/>
        <end position="400"/>
    </location>
</feature>
<feature type="topological domain" description="Mitochondrial matrix" evidence="2">
    <location>
        <begin position="401"/>
        <end position="406"/>
    </location>
</feature>
<feature type="transmembrane region" description="Helical; Name=XI" evidence="2">
    <location>
        <begin position="407"/>
        <end position="433"/>
    </location>
</feature>
<feature type="topological domain" description="Mitochondrial intermembrane" evidence="2">
    <location>
        <begin position="434"/>
        <end position="446"/>
    </location>
</feature>
<feature type="transmembrane region" description="Helical; Name=XII" evidence="2">
    <location>
        <begin position="447"/>
        <end position="478"/>
    </location>
</feature>
<feature type="topological domain" description="Mitochondrial matrix" evidence="2">
    <location>
        <begin position="479"/>
        <end position="516"/>
    </location>
</feature>
<feature type="binding site" evidence="2">
    <location>
        <position position="40"/>
    </location>
    <ligand>
        <name>Na(+)</name>
        <dbReference type="ChEBI" id="CHEBI:29101"/>
    </ligand>
</feature>
<feature type="binding site" evidence="2">
    <location>
        <position position="45"/>
    </location>
    <ligand>
        <name>Na(+)</name>
        <dbReference type="ChEBI" id="CHEBI:29101"/>
    </ligand>
</feature>
<feature type="binding site" description="axial binding residue" evidence="2">
    <location>
        <position position="61"/>
    </location>
    <ligand>
        <name>Fe(II)-heme a</name>
        <dbReference type="ChEBI" id="CHEBI:61715"/>
        <note>low-spin</note>
    </ligand>
    <ligandPart>
        <name>Fe</name>
        <dbReference type="ChEBI" id="CHEBI:18248"/>
    </ligandPart>
</feature>
<feature type="binding site" evidence="2">
    <location>
        <position position="240"/>
    </location>
    <ligand>
        <name>Cu cation</name>
        <dbReference type="ChEBI" id="CHEBI:23378"/>
        <label>B</label>
    </ligand>
</feature>
<feature type="binding site" evidence="2">
    <location>
        <position position="244"/>
    </location>
    <ligand>
        <name>O2</name>
        <dbReference type="ChEBI" id="CHEBI:15379"/>
    </ligand>
</feature>
<feature type="binding site" evidence="2">
    <location>
        <position position="290"/>
    </location>
    <ligand>
        <name>Cu cation</name>
        <dbReference type="ChEBI" id="CHEBI:23378"/>
        <label>B</label>
    </ligand>
</feature>
<feature type="binding site" evidence="2">
    <location>
        <position position="291"/>
    </location>
    <ligand>
        <name>Cu cation</name>
        <dbReference type="ChEBI" id="CHEBI:23378"/>
        <label>B</label>
    </ligand>
</feature>
<feature type="binding site" evidence="2">
    <location>
        <position position="368"/>
    </location>
    <ligand>
        <name>Mg(2+)</name>
        <dbReference type="ChEBI" id="CHEBI:18420"/>
        <note>ligand shared with MT-CO2</note>
    </ligand>
</feature>
<feature type="binding site" evidence="2">
    <location>
        <position position="369"/>
    </location>
    <ligand>
        <name>Mg(2+)</name>
        <dbReference type="ChEBI" id="CHEBI:18420"/>
        <note>ligand shared with MT-CO2</note>
    </ligand>
</feature>
<feature type="binding site" description="axial binding residue" evidence="2">
    <location>
        <position position="376"/>
    </location>
    <ligand>
        <name>heme a3</name>
        <dbReference type="ChEBI" id="CHEBI:83282"/>
        <note>high-spin</note>
    </ligand>
    <ligandPart>
        <name>Fe</name>
        <dbReference type="ChEBI" id="CHEBI:18248"/>
    </ligandPart>
</feature>
<feature type="binding site" description="axial binding residue" evidence="2">
    <location>
        <position position="378"/>
    </location>
    <ligand>
        <name>Fe(II)-heme a</name>
        <dbReference type="ChEBI" id="CHEBI:61715"/>
        <note>low-spin</note>
    </ligand>
    <ligandPart>
        <name>Fe</name>
        <dbReference type="ChEBI" id="CHEBI:18248"/>
    </ligandPart>
</feature>
<feature type="binding site" evidence="2">
    <location>
        <position position="441"/>
    </location>
    <ligand>
        <name>Na(+)</name>
        <dbReference type="ChEBI" id="CHEBI:29101"/>
    </ligand>
</feature>
<feature type="cross-link" description="1'-histidyl-3'-tyrosine (His-Tyr)" evidence="2">
    <location>
        <begin position="240"/>
        <end position="244"/>
    </location>
</feature>
<geneLocation type="mitochondrion"/>
<dbReference type="EC" id="7.1.1.9"/>
<dbReference type="EMBL" id="X72204">
    <property type="protein sequence ID" value="CAA50997.1"/>
    <property type="molecule type" value="Genomic_DNA"/>
</dbReference>
<dbReference type="PIR" id="S41822">
    <property type="entry name" value="S41822"/>
</dbReference>
<dbReference type="RefSeq" id="NP_007058.1">
    <property type="nucleotide sequence ID" value="NC_001601.1"/>
</dbReference>
<dbReference type="SMR" id="P41293"/>
<dbReference type="GeneID" id="807733"/>
<dbReference type="KEGG" id="bmus:807733"/>
<dbReference type="CTD" id="4512"/>
<dbReference type="OrthoDB" id="9677320at2759"/>
<dbReference type="UniPathway" id="UPA00705"/>
<dbReference type="Proteomes" id="UP000694857">
    <property type="component" value="Mitochondrion MT"/>
</dbReference>
<dbReference type="GO" id="GO:0005743">
    <property type="term" value="C:mitochondrial inner membrane"/>
    <property type="evidence" value="ECO:0007669"/>
    <property type="project" value="UniProtKB-SubCell"/>
</dbReference>
<dbReference type="GO" id="GO:0045277">
    <property type="term" value="C:respiratory chain complex IV"/>
    <property type="evidence" value="ECO:0000250"/>
    <property type="project" value="UniProtKB"/>
</dbReference>
<dbReference type="GO" id="GO:0004129">
    <property type="term" value="F:cytochrome-c oxidase activity"/>
    <property type="evidence" value="ECO:0007669"/>
    <property type="project" value="UniProtKB-EC"/>
</dbReference>
<dbReference type="GO" id="GO:0020037">
    <property type="term" value="F:heme binding"/>
    <property type="evidence" value="ECO:0007669"/>
    <property type="project" value="InterPro"/>
</dbReference>
<dbReference type="GO" id="GO:0046872">
    <property type="term" value="F:metal ion binding"/>
    <property type="evidence" value="ECO:0007669"/>
    <property type="project" value="UniProtKB-KW"/>
</dbReference>
<dbReference type="GO" id="GO:0015990">
    <property type="term" value="P:electron transport coupled proton transport"/>
    <property type="evidence" value="ECO:0007669"/>
    <property type="project" value="TreeGrafter"/>
</dbReference>
<dbReference type="GO" id="GO:0006123">
    <property type="term" value="P:mitochondrial electron transport, cytochrome c to oxygen"/>
    <property type="evidence" value="ECO:0007669"/>
    <property type="project" value="TreeGrafter"/>
</dbReference>
<dbReference type="CDD" id="cd01663">
    <property type="entry name" value="Cyt_c_Oxidase_I"/>
    <property type="match status" value="1"/>
</dbReference>
<dbReference type="FunFam" id="1.20.210.10:FF:000001">
    <property type="entry name" value="Cytochrome c oxidase subunit 1"/>
    <property type="match status" value="1"/>
</dbReference>
<dbReference type="Gene3D" id="1.20.210.10">
    <property type="entry name" value="Cytochrome c oxidase-like, subunit I domain"/>
    <property type="match status" value="1"/>
</dbReference>
<dbReference type="InterPro" id="IPR023616">
    <property type="entry name" value="Cyt_c_oxase-like_su1_dom"/>
</dbReference>
<dbReference type="InterPro" id="IPR036927">
    <property type="entry name" value="Cyt_c_oxase-like_su1_sf"/>
</dbReference>
<dbReference type="InterPro" id="IPR000883">
    <property type="entry name" value="Cyt_C_Oxase_1"/>
</dbReference>
<dbReference type="InterPro" id="IPR023615">
    <property type="entry name" value="Cyt_c_Oxase_su1_BS"/>
</dbReference>
<dbReference type="InterPro" id="IPR033944">
    <property type="entry name" value="Cyt_c_oxase_su1_dom"/>
</dbReference>
<dbReference type="PANTHER" id="PTHR10422">
    <property type="entry name" value="CYTOCHROME C OXIDASE SUBUNIT 1"/>
    <property type="match status" value="1"/>
</dbReference>
<dbReference type="PANTHER" id="PTHR10422:SF18">
    <property type="entry name" value="CYTOCHROME C OXIDASE SUBUNIT 1"/>
    <property type="match status" value="1"/>
</dbReference>
<dbReference type="Pfam" id="PF00115">
    <property type="entry name" value="COX1"/>
    <property type="match status" value="1"/>
</dbReference>
<dbReference type="PRINTS" id="PR01165">
    <property type="entry name" value="CYCOXIDASEI"/>
</dbReference>
<dbReference type="SUPFAM" id="SSF81442">
    <property type="entry name" value="Cytochrome c oxidase subunit I-like"/>
    <property type="match status" value="1"/>
</dbReference>
<dbReference type="PROSITE" id="PS50855">
    <property type="entry name" value="COX1"/>
    <property type="match status" value="1"/>
</dbReference>
<dbReference type="PROSITE" id="PS00077">
    <property type="entry name" value="COX1_CUB"/>
    <property type="match status" value="1"/>
</dbReference>
<comment type="function">
    <text evidence="3">Component of the cytochrome c oxidase, the last enzyme in the mitochondrial electron transport chain which drives oxidative phosphorylation. The respiratory chain contains 3 multisubunit complexes succinate dehydrogenase (complex II, CII), ubiquinol-cytochrome c oxidoreductase (cytochrome b-c1 complex, complex III, CIII) and cytochrome c oxidase (complex IV, CIV), that cooperate to transfer electrons derived from NADH and succinate to molecular oxygen, creating an electrochemical gradient over the inner membrane that drives transmembrane transport and the ATP synthase. Cytochrome c oxidase is the component of the respiratory chain that catalyzes the reduction of oxygen to water. Electrons originating from reduced cytochrome c in the intermembrane space (IMS) are transferred via the dinuclear copper A center (CU(A)) of subunit 2 and heme A of subunit 1 to the active site in subunit 1, a binuclear center (BNC) formed by heme A3 and copper B (CU(B)). The BNC reduces molecular oxygen to 2 water molecules using 4 electrons from cytochrome c in the IMS and 4 protons from the mitochondrial matrix.</text>
</comment>
<comment type="catalytic activity">
    <reaction evidence="3">
        <text>4 Fe(II)-[cytochrome c] + O2 + 8 H(+)(in) = 4 Fe(III)-[cytochrome c] + 2 H2O + 4 H(+)(out)</text>
        <dbReference type="Rhea" id="RHEA:11436"/>
        <dbReference type="Rhea" id="RHEA-COMP:10350"/>
        <dbReference type="Rhea" id="RHEA-COMP:14399"/>
        <dbReference type="ChEBI" id="CHEBI:15377"/>
        <dbReference type="ChEBI" id="CHEBI:15378"/>
        <dbReference type="ChEBI" id="CHEBI:15379"/>
        <dbReference type="ChEBI" id="CHEBI:29033"/>
        <dbReference type="ChEBI" id="CHEBI:29034"/>
        <dbReference type="EC" id="7.1.1.9"/>
    </reaction>
    <physiologicalReaction direction="left-to-right" evidence="3">
        <dbReference type="Rhea" id="RHEA:11437"/>
    </physiologicalReaction>
</comment>
<comment type="cofactor">
    <cofactor evidence="2">
        <name>heme</name>
        <dbReference type="ChEBI" id="CHEBI:30413"/>
    </cofactor>
    <text evidence="2">Binds 2 heme A groups non-covalently per subunit.</text>
</comment>
<comment type="cofactor">
    <cofactor evidence="2">
        <name>Cu cation</name>
        <dbReference type="ChEBI" id="CHEBI:23378"/>
    </cofactor>
    <text evidence="2">Binds a copper B center.</text>
</comment>
<comment type="pathway">
    <text evidence="3">Energy metabolism; oxidative phosphorylation.</text>
</comment>
<comment type="subunit">
    <text evidence="1 2">Component of the cytochrome c oxidase (complex IV, CIV), a multisubunit enzyme composed of 14 subunits. The complex is composed of a catalytic core of 3 subunits MT-CO1, MT-CO2 and MT-CO3, encoded in the mitochondrial DNA, and 11 supernumerary subunits COX4I, COX5A, COX5B, COX6A, COX6B, COX6C, COX7A, COX7B, COX7C, COX8 and NDUFA4, which are encoded in the nuclear genome. The complex exists as a monomer or a dimer and forms supercomplexes (SCs) in the inner mitochondrial membrane with NADH-ubiquinone oxidoreductase (complex I, CI) and ubiquinol-cytochrome c oxidoreductase (cytochrome b-c1 complex, complex III, CIII), resulting in different assemblies (supercomplex SCI(1)III(2)IV(1) and megacomplex MCI(2)III(2)IV(2)) (By similarity). As a newly synthesized protein, rapidly incorporates into a multi-subunit assembly intermediate in the inner membrane, called MITRAC (mitochondrial translation regulation assembly intermediate of cytochrome c oxidase) complex, whose core components are COA3/MITRAC12 and COX14. Within the MITRAC complex, interacts with COA3 and with SMIM20/MITRAC7; the interaction with SMIM20 stabilizes the newly synthesized MT-CO1 and prevents its premature turnover. Interacts with TMEM177 in a COX20-dependent manner (By similarity).</text>
</comment>
<comment type="subcellular location">
    <subcellularLocation>
        <location evidence="2">Mitochondrion inner membrane</location>
        <topology evidence="2">Multi-pass membrane protein</topology>
    </subcellularLocation>
</comment>
<comment type="similarity">
    <text evidence="4">Belongs to the heme-copper respiratory oxidase family.</text>
</comment>
<protein>
    <recommendedName>
        <fullName>Cytochrome c oxidase subunit 1</fullName>
        <ecNumber>7.1.1.9</ecNumber>
    </recommendedName>
    <alternativeName>
        <fullName>Cytochrome c oxidase polypeptide I</fullName>
    </alternativeName>
</protein>
<organism>
    <name type="scientific">Balaenoptera musculus</name>
    <name type="common">Blue whale</name>
    <dbReference type="NCBI Taxonomy" id="9771"/>
    <lineage>
        <taxon>Eukaryota</taxon>
        <taxon>Metazoa</taxon>
        <taxon>Chordata</taxon>
        <taxon>Craniata</taxon>
        <taxon>Vertebrata</taxon>
        <taxon>Euteleostomi</taxon>
        <taxon>Mammalia</taxon>
        <taxon>Eutheria</taxon>
        <taxon>Laurasiatheria</taxon>
        <taxon>Artiodactyla</taxon>
        <taxon>Whippomorpha</taxon>
        <taxon>Cetacea</taxon>
        <taxon>Mysticeti</taxon>
        <taxon>Balaenopteridae</taxon>
        <taxon>Balaenoptera</taxon>
    </lineage>
</organism>
<evidence type="ECO:0000250" key="1">
    <source>
        <dbReference type="UniProtKB" id="P00395"/>
    </source>
</evidence>
<evidence type="ECO:0000250" key="2">
    <source>
        <dbReference type="UniProtKB" id="P00396"/>
    </source>
</evidence>
<evidence type="ECO:0000250" key="3">
    <source>
        <dbReference type="UniProtKB" id="P00401"/>
    </source>
</evidence>
<evidence type="ECO:0000305" key="4"/>
<keyword id="KW-0106">Calcium</keyword>
<keyword id="KW-0186">Copper</keyword>
<keyword id="KW-0249">Electron transport</keyword>
<keyword id="KW-0349">Heme</keyword>
<keyword id="KW-0408">Iron</keyword>
<keyword id="KW-0460">Magnesium</keyword>
<keyword id="KW-0472">Membrane</keyword>
<keyword id="KW-0479">Metal-binding</keyword>
<keyword id="KW-0496">Mitochondrion</keyword>
<keyword id="KW-0999">Mitochondrion inner membrane</keyword>
<keyword id="KW-1185">Reference proteome</keyword>
<keyword id="KW-0679">Respiratory chain</keyword>
<keyword id="KW-0915">Sodium</keyword>
<keyword id="KW-1278">Translocase</keyword>
<keyword id="KW-0812">Transmembrane</keyword>
<keyword id="KW-1133">Transmembrane helix</keyword>
<keyword id="KW-0813">Transport</keyword>
<name>COX1_BALMU</name>
<proteinExistence type="inferred from homology"/>
<accession>P41293</accession>
<reference key="1">
    <citation type="journal article" date="1993" name="J. Mol. Evol.">
        <title>Comparison between the complete mtDNA sequences of the blue and the fin whale, two species that can hybridize in nature.</title>
        <authorList>
            <person name="Arnason U."/>
            <person name="Gullberg A."/>
        </authorList>
    </citation>
    <scope>NUCLEOTIDE SEQUENCE [GENOMIC DNA]</scope>
</reference>